<name>DNLJ_LEVBA</name>
<evidence type="ECO:0000255" key="1">
    <source>
        <dbReference type="HAMAP-Rule" id="MF_01588"/>
    </source>
</evidence>
<keyword id="KW-0227">DNA damage</keyword>
<keyword id="KW-0234">DNA repair</keyword>
<keyword id="KW-0235">DNA replication</keyword>
<keyword id="KW-0436">Ligase</keyword>
<keyword id="KW-0460">Magnesium</keyword>
<keyword id="KW-0464">Manganese</keyword>
<keyword id="KW-0479">Metal-binding</keyword>
<keyword id="KW-0520">NAD</keyword>
<keyword id="KW-1185">Reference proteome</keyword>
<keyword id="KW-0862">Zinc</keyword>
<comment type="function">
    <text evidence="1">DNA ligase that catalyzes the formation of phosphodiester linkages between 5'-phosphoryl and 3'-hydroxyl groups in double-stranded DNA using NAD as a coenzyme and as the energy source for the reaction. It is essential for DNA replication and repair of damaged DNA.</text>
</comment>
<comment type="catalytic activity">
    <reaction evidence="1">
        <text>NAD(+) + (deoxyribonucleotide)n-3'-hydroxyl + 5'-phospho-(deoxyribonucleotide)m = (deoxyribonucleotide)n+m + AMP + beta-nicotinamide D-nucleotide.</text>
        <dbReference type="EC" id="6.5.1.2"/>
    </reaction>
</comment>
<comment type="cofactor">
    <cofactor evidence="1">
        <name>Mg(2+)</name>
        <dbReference type="ChEBI" id="CHEBI:18420"/>
    </cofactor>
    <cofactor evidence="1">
        <name>Mn(2+)</name>
        <dbReference type="ChEBI" id="CHEBI:29035"/>
    </cofactor>
</comment>
<comment type="similarity">
    <text evidence="1">Belongs to the NAD-dependent DNA ligase family. LigA subfamily.</text>
</comment>
<reference key="1">
    <citation type="journal article" date="2006" name="Proc. Natl. Acad. Sci. U.S.A.">
        <title>Comparative genomics of the lactic acid bacteria.</title>
        <authorList>
            <person name="Makarova K.S."/>
            <person name="Slesarev A."/>
            <person name="Wolf Y.I."/>
            <person name="Sorokin A."/>
            <person name="Mirkin B."/>
            <person name="Koonin E.V."/>
            <person name="Pavlov A."/>
            <person name="Pavlova N."/>
            <person name="Karamychev V."/>
            <person name="Polouchine N."/>
            <person name="Shakhova V."/>
            <person name="Grigoriev I."/>
            <person name="Lou Y."/>
            <person name="Rohksar D."/>
            <person name="Lucas S."/>
            <person name="Huang K."/>
            <person name="Goodstein D.M."/>
            <person name="Hawkins T."/>
            <person name="Plengvidhya V."/>
            <person name="Welker D."/>
            <person name="Hughes J."/>
            <person name="Goh Y."/>
            <person name="Benson A."/>
            <person name="Baldwin K."/>
            <person name="Lee J.-H."/>
            <person name="Diaz-Muniz I."/>
            <person name="Dosti B."/>
            <person name="Smeianov V."/>
            <person name="Wechter W."/>
            <person name="Barabote R."/>
            <person name="Lorca G."/>
            <person name="Altermann E."/>
            <person name="Barrangou R."/>
            <person name="Ganesan B."/>
            <person name="Xie Y."/>
            <person name="Rawsthorne H."/>
            <person name="Tamir D."/>
            <person name="Parker C."/>
            <person name="Breidt F."/>
            <person name="Broadbent J.R."/>
            <person name="Hutkins R."/>
            <person name="O'Sullivan D."/>
            <person name="Steele J."/>
            <person name="Unlu G."/>
            <person name="Saier M.H. Jr."/>
            <person name="Klaenhammer T."/>
            <person name="Richardson P."/>
            <person name="Kozyavkin S."/>
            <person name="Weimer B.C."/>
            <person name="Mills D.A."/>
        </authorList>
    </citation>
    <scope>NUCLEOTIDE SEQUENCE [LARGE SCALE GENOMIC DNA]</scope>
    <source>
        <strain>ATCC 367 / BCRC 12310 / CIP 105137 / JCM 1170 / LMG 11437 / NCIMB 947 / NCTC 947</strain>
    </source>
</reference>
<feature type="chain" id="PRO_0000313272" description="DNA ligase">
    <location>
        <begin position="1"/>
        <end position="676"/>
    </location>
</feature>
<feature type="domain" description="BRCT" evidence="1">
    <location>
        <begin position="596"/>
        <end position="676"/>
    </location>
</feature>
<feature type="active site" description="N6-AMP-lysine intermediate" evidence="1">
    <location>
        <position position="123"/>
    </location>
</feature>
<feature type="binding site" evidence="1">
    <location>
        <begin position="42"/>
        <end position="46"/>
    </location>
    <ligand>
        <name>NAD(+)</name>
        <dbReference type="ChEBI" id="CHEBI:57540"/>
    </ligand>
</feature>
<feature type="binding site" evidence="1">
    <location>
        <begin position="91"/>
        <end position="92"/>
    </location>
    <ligand>
        <name>NAD(+)</name>
        <dbReference type="ChEBI" id="CHEBI:57540"/>
    </ligand>
</feature>
<feature type="binding site" evidence="1">
    <location>
        <position position="121"/>
    </location>
    <ligand>
        <name>NAD(+)</name>
        <dbReference type="ChEBI" id="CHEBI:57540"/>
    </ligand>
</feature>
<feature type="binding site" evidence="1">
    <location>
        <position position="144"/>
    </location>
    <ligand>
        <name>NAD(+)</name>
        <dbReference type="ChEBI" id="CHEBI:57540"/>
    </ligand>
</feature>
<feature type="binding site" evidence="1">
    <location>
        <position position="178"/>
    </location>
    <ligand>
        <name>NAD(+)</name>
        <dbReference type="ChEBI" id="CHEBI:57540"/>
    </ligand>
</feature>
<feature type="binding site" evidence="1">
    <location>
        <position position="294"/>
    </location>
    <ligand>
        <name>NAD(+)</name>
        <dbReference type="ChEBI" id="CHEBI:57540"/>
    </ligand>
</feature>
<feature type="binding site" evidence="1">
    <location>
        <position position="318"/>
    </location>
    <ligand>
        <name>NAD(+)</name>
        <dbReference type="ChEBI" id="CHEBI:57540"/>
    </ligand>
</feature>
<feature type="binding site" evidence="1">
    <location>
        <position position="412"/>
    </location>
    <ligand>
        <name>Zn(2+)</name>
        <dbReference type="ChEBI" id="CHEBI:29105"/>
    </ligand>
</feature>
<feature type="binding site" evidence="1">
    <location>
        <position position="415"/>
    </location>
    <ligand>
        <name>Zn(2+)</name>
        <dbReference type="ChEBI" id="CHEBI:29105"/>
    </ligand>
</feature>
<feature type="binding site" evidence="1">
    <location>
        <position position="430"/>
    </location>
    <ligand>
        <name>Zn(2+)</name>
        <dbReference type="ChEBI" id="CHEBI:29105"/>
    </ligand>
</feature>
<feature type="binding site" evidence="1">
    <location>
        <position position="435"/>
    </location>
    <ligand>
        <name>Zn(2+)</name>
        <dbReference type="ChEBI" id="CHEBI:29105"/>
    </ligand>
</feature>
<sequence length="676" mass="73459">MTDKPIKTLTVEQAAEEAADLRPQLLEWGKQYYEADAPSVEDDVYDRVYARLVALETAFPEIVTPDSPTQRVGGSSRSDLPKVTHDIPMLSLGDVFSLDELTEFDERLRGNVDTPFDYNCELKIDGLAISLRYENGKFVQGSTRGNGQIGEDITANLKTIKSIPQTLSRPLTIEVRGECYMPKAAFLALNERREAAGQAPFANPRNAAAGSLRQLDTRVTADRQLATFMYNVADYEPLTTRTQSGLLDELAELGFTTNATYRVAHDMADVAAYIETYQAQRTELAYGIDGIVIKANDLPLQRSLGATVKVPRWAIAYKFPPEEVQTRVLDIEWTIGRTGVVTPTAIMEPVALAGSTVARASLHNPDYLIAKDIRIGDTVLLHKAGDIIPEISQYVAAKRPAEAKAYVIPTTCPSCGAELVHLDDEVALRCINPRCPAQLAEGMNHFASRNAMNIAGLGPQIVAQLFDRNLVQDVADLYRLTTDQLLTLDKFGEKSAQNLLTAIDNSRNNSLERLLFGLGIRHVGAKAARSLAAAFGDMASLMAADSEQISAIDTVGGIIADSVVTYFANTQVHELVAKLQAVGVNMTYTSGTPATNSTSEFTGKRVVLTGKLQELTRPQATEWLEQHGATVTGSVSKKTDLLIAGEAAGSKLAKAQSLDVPVWNEAQLQAAMDETK</sequence>
<accession>Q03Q13</accession>
<protein>
    <recommendedName>
        <fullName evidence="1">DNA ligase</fullName>
        <ecNumber evidence="1">6.5.1.2</ecNumber>
    </recommendedName>
    <alternativeName>
        <fullName evidence="1">Polydeoxyribonucleotide synthase [NAD(+)]</fullName>
    </alternativeName>
</protein>
<gene>
    <name evidence="1" type="primary">ligA</name>
    <name type="ordered locus">LVIS_1633</name>
</gene>
<proteinExistence type="inferred from homology"/>
<organism>
    <name type="scientific">Levilactobacillus brevis (strain ATCC 367 / BCRC 12310 / CIP 105137 / JCM 1170 / LMG 11437 / NCIMB 947 / NCTC 947)</name>
    <name type="common">Lactobacillus brevis</name>
    <dbReference type="NCBI Taxonomy" id="387344"/>
    <lineage>
        <taxon>Bacteria</taxon>
        <taxon>Bacillati</taxon>
        <taxon>Bacillota</taxon>
        <taxon>Bacilli</taxon>
        <taxon>Lactobacillales</taxon>
        <taxon>Lactobacillaceae</taxon>
        <taxon>Levilactobacillus</taxon>
    </lineage>
</organism>
<dbReference type="EC" id="6.5.1.2" evidence="1"/>
<dbReference type="EMBL" id="CP000416">
    <property type="protein sequence ID" value="ABJ64709.1"/>
    <property type="molecule type" value="Genomic_DNA"/>
</dbReference>
<dbReference type="RefSeq" id="WP_011668334.1">
    <property type="nucleotide sequence ID" value="NC_008497.1"/>
</dbReference>
<dbReference type="SMR" id="Q03Q13"/>
<dbReference type="STRING" id="387344.LVIS_1633"/>
<dbReference type="KEGG" id="lbr:LVIS_1633"/>
<dbReference type="PATRIC" id="fig|387344.15.peg.1545"/>
<dbReference type="eggNOG" id="COG0272">
    <property type="taxonomic scope" value="Bacteria"/>
</dbReference>
<dbReference type="HOGENOM" id="CLU_007764_2_1_9"/>
<dbReference type="Proteomes" id="UP000001652">
    <property type="component" value="Chromosome"/>
</dbReference>
<dbReference type="GO" id="GO:0005829">
    <property type="term" value="C:cytosol"/>
    <property type="evidence" value="ECO:0007669"/>
    <property type="project" value="TreeGrafter"/>
</dbReference>
<dbReference type="GO" id="GO:0003911">
    <property type="term" value="F:DNA ligase (NAD+) activity"/>
    <property type="evidence" value="ECO:0007669"/>
    <property type="project" value="UniProtKB-UniRule"/>
</dbReference>
<dbReference type="GO" id="GO:0046872">
    <property type="term" value="F:metal ion binding"/>
    <property type="evidence" value="ECO:0007669"/>
    <property type="project" value="UniProtKB-KW"/>
</dbReference>
<dbReference type="GO" id="GO:0006281">
    <property type="term" value="P:DNA repair"/>
    <property type="evidence" value="ECO:0007669"/>
    <property type="project" value="UniProtKB-KW"/>
</dbReference>
<dbReference type="GO" id="GO:0006260">
    <property type="term" value="P:DNA replication"/>
    <property type="evidence" value="ECO:0007669"/>
    <property type="project" value="UniProtKB-KW"/>
</dbReference>
<dbReference type="CDD" id="cd17748">
    <property type="entry name" value="BRCT_DNA_ligase_like"/>
    <property type="match status" value="1"/>
</dbReference>
<dbReference type="CDD" id="cd00114">
    <property type="entry name" value="LIGANc"/>
    <property type="match status" value="1"/>
</dbReference>
<dbReference type="FunFam" id="1.10.150.20:FF:000006">
    <property type="entry name" value="DNA ligase"/>
    <property type="match status" value="1"/>
</dbReference>
<dbReference type="FunFam" id="1.10.150.20:FF:000007">
    <property type="entry name" value="DNA ligase"/>
    <property type="match status" value="1"/>
</dbReference>
<dbReference type="FunFam" id="2.40.50.140:FF:000012">
    <property type="entry name" value="DNA ligase"/>
    <property type="match status" value="1"/>
</dbReference>
<dbReference type="FunFam" id="3.30.470.30:FF:000001">
    <property type="entry name" value="DNA ligase"/>
    <property type="match status" value="1"/>
</dbReference>
<dbReference type="Gene3D" id="6.20.10.30">
    <property type="match status" value="1"/>
</dbReference>
<dbReference type="Gene3D" id="1.10.150.20">
    <property type="entry name" value="5' to 3' exonuclease, C-terminal subdomain"/>
    <property type="match status" value="2"/>
</dbReference>
<dbReference type="Gene3D" id="3.40.50.10190">
    <property type="entry name" value="BRCT domain"/>
    <property type="match status" value="1"/>
</dbReference>
<dbReference type="Gene3D" id="3.30.470.30">
    <property type="entry name" value="DNA ligase/mRNA capping enzyme"/>
    <property type="match status" value="1"/>
</dbReference>
<dbReference type="Gene3D" id="1.10.287.610">
    <property type="entry name" value="Helix hairpin bin"/>
    <property type="match status" value="1"/>
</dbReference>
<dbReference type="Gene3D" id="2.40.50.140">
    <property type="entry name" value="Nucleic acid-binding proteins"/>
    <property type="match status" value="1"/>
</dbReference>
<dbReference type="HAMAP" id="MF_01588">
    <property type="entry name" value="DNA_ligase_A"/>
    <property type="match status" value="1"/>
</dbReference>
<dbReference type="InterPro" id="IPR001357">
    <property type="entry name" value="BRCT_dom"/>
</dbReference>
<dbReference type="InterPro" id="IPR036420">
    <property type="entry name" value="BRCT_dom_sf"/>
</dbReference>
<dbReference type="InterPro" id="IPR041663">
    <property type="entry name" value="DisA/LigA_HHH"/>
</dbReference>
<dbReference type="InterPro" id="IPR001679">
    <property type="entry name" value="DNA_ligase"/>
</dbReference>
<dbReference type="InterPro" id="IPR018239">
    <property type="entry name" value="DNA_ligase_AS"/>
</dbReference>
<dbReference type="InterPro" id="IPR033136">
    <property type="entry name" value="DNA_ligase_CS"/>
</dbReference>
<dbReference type="InterPro" id="IPR013839">
    <property type="entry name" value="DNAligase_adenylation"/>
</dbReference>
<dbReference type="InterPro" id="IPR013840">
    <property type="entry name" value="DNAligase_N"/>
</dbReference>
<dbReference type="InterPro" id="IPR012340">
    <property type="entry name" value="NA-bd_OB-fold"/>
</dbReference>
<dbReference type="InterPro" id="IPR004150">
    <property type="entry name" value="NAD_DNA_ligase_OB"/>
</dbReference>
<dbReference type="InterPro" id="IPR010994">
    <property type="entry name" value="RuvA_2-like"/>
</dbReference>
<dbReference type="InterPro" id="IPR004149">
    <property type="entry name" value="Znf_DNAligase_C4"/>
</dbReference>
<dbReference type="NCBIfam" id="TIGR00575">
    <property type="entry name" value="dnlj"/>
    <property type="match status" value="1"/>
</dbReference>
<dbReference type="NCBIfam" id="NF005932">
    <property type="entry name" value="PRK07956.1"/>
    <property type="match status" value="1"/>
</dbReference>
<dbReference type="PANTHER" id="PTHR23389">
    <property type="entry name" value="CHROMOSOME TRANSMISSION FIDELITY FACTOR 18"/>
    <property type="match status" value="1"/>
</dbReference>
<dbReference type="PANTHER" id="PTHR23389:SF9">
    <property type="entry name" value="DNA LIGASE"/>
    <property type="match status" value="1"/>
</dbReference>
<dbReference type="Pfam" id="PF00533">
    <property type="entry name" value="BRCT"/>
    <property type="match status" value="1"/>
</dbReference>
<dbReference type="Pfam" id="PF01653">
    <property type="entry name" value="DNA_ligase_aden"/>
    <property type="match status" value="1"/>
</dbReference>
<dbReference type="Pfam" id="PF03120">
    <property type="entry name" value="DNA_ligase_OB"/>
    <property type="match status" value="1"/>
</dbReference>
<dbReference type="Pfam" id="PF03119">
    <property type="entry name" value="DNA_ligase_ZBD"/>
    <property type="match status" value="1"/>
</dbReference>
<dbReference type="Pfam" id="PF12826">
    <property type="entry name" value="HHH_2"/>
    <property type="match status" value="1"/>
</dbReference>
<dbReference type="Pfam" id="PF14520">
    <property type="entry name" value="HHH_5"/>
    <property type="match status" value="1"/>
</dbReference>
<dbReference type="PIRSF" id="PIRSF001604">
    <property type="entry name" value="LigA"/>
    <property type="match status" value="1"/>
</dbReference>
<dbReference type="SMART" id="SM00292">
    <property type="entry name" value="BRCT"/>
    <property type="match status" value="1"/>
</dbReference>
<dbReference type="SMART" id="SM00532">
    <property type="entry name" value="LIGANc"/>
    <property type="match status" value="1"/>
</dbReference>
<dbReference type="SUPFAM" id="SSF52113">
    <property type="entry name" value="BRCT domain"/>
    <property type="match status" value="1"/>
</dbReference>
<dbReference type="SUPFAM" id="SSF56091">
    <property type="entry name" value="DNA ligase/mRNA capping enzyme, catalytic domain"/>
    <property type="match status" value="1"/>
</dbReference>
<dbReference type="SUPFAM" id="SSF50249">
    <property type="entry name" value="Nucleic acid-binding proteins"/>
    <property type="match status" value="1"/>
</dbReference>
<dbReference type="SUPFAM" id="SSF47781">
    <property type="entry name" value="RuvA domain 2-like"/>
    <property type="match status" value="1"/>
</dbReference>
<dbReference type="PROSITE" id="PS50172">
    <property type="entry name" value="BRCT"/>
    <property type="match status" value="1"/>
</dbReference>
<dbReference type="PROSITE" id="PS01055">
    <property type="entry name" value="DNA_LIGASE_N1"/>
    <property type="match status" value="1"/>
</dbReference>
<dbReference type="PROSITE" id="PS01056">
    <property type="entry name" value="DNA_LIGASE_N2"/>
    <property type="match status" value="1"/>
</dbReference>